<reference key="1">
    <citation type="journal article" date="2009" name="Dev. Comp. Immunol.">
        <title>Multipeptide precursor structure of acaloleptin A isoforms, antibacterial peptides from the Udo longicorn beetle, Acalolepta luxuriosa.</title>
        <authorList>
            <person name="Imamura M."/>
            <person name="Wada S."/>
            <person name="Ueda K."/>
            <person name="Saito A."/>
            <person name="Koizumi N."/>
            <person name="Iwahana H."/>
            <person name="Sato R."/>
        </authorList>
    </citation>
    <scope>NUCLEOTIDE SEQUENCE [MRNA]</scope>
    <scope>PROTEIN SEQUENCE OF 355-367</scope>
    <scope>FUNCTION</scope>
    <scope>SUBCELLULAR LOCATION</scope>
    <scope>TISSUE SPECIFICITY</scope>
    <scope>INDUCTION</scope>
    <source>
        <tissue>Fat body</tissue>
        <tissue>Hemolymph</tissue>
    </source>
</reference>
<reference key="2">
    <citation type="journal article" date="1999" name="Arch. Insect Biochem. Physiol.">
        <title>Acaloleptins A: inducible antibacterial peptides from larvae of the beetle, Acalolepta luxuriosa.</title>
        <authorList>
            <person name="Imamura M."/>
            <person name="Wada S."/>
            <person name="Koizumi N."/>
            <person name="Kadotani T."/>
            <person name="Yaoi K."/>
            <person name="Sato R."/>
            <person name="Iwahana H."/>
        </authorList>
    </citation>
    <scope>PROTEIN SEQUENCE OF 173-243</scope>
    <scope>FUNCTION</scope>
    <scope>SUBCELLULAR LOCATION</scope>
    <scope>TISSUE SPECIFICITY</scope>
    <scope>INDUCTION</scope>
    <source>
        <tissue>Hemolymph</tissue>
    </source>
</reference>
<protein>
    <recommendedName>
        <fullName>Acaloleptin A</fullName>
    </recommendedName>
    <component>
        <recommendedName>
            <fullName>Acaloleptin A1</fullName>
        </recommendedName>
    </component>
    <component>
        <recommendedName>
            <fullName>Acaloleptin A2</fullName>
        </recommendedName>
    </component>
    <component>
        <recommendedName>
            <fullName>Acaloleptin A3</fullName>
        </recommendedName>
    </component>
    <component>
        <recommendedName>
            <fullName>Acaloleptin A4</fullName>
        </recommendedName>
    </component>
    <component>
        <recommendedName>
            <fullName>Acidic peptide</fullName>
        </recommendedName>
    </component>
    <component>
        <recommendedName>
            <fullName>Acaloleptin A5</fullName>
        </recommendedName>
    </component>
</protein>
<proteinExistence type="evidence at protein level"/>
<keyword id="KW-0044">Antibiotic</keyword>
<keyword id="KW-0929">Antimicrobial</keyword>
<keyword id="KW-0165">Cleavage on pair of basic residues</keyword>
<keyword id="KW-0903">Direct protein sequencing</keyword>
<keyword id="KW-0391">Immunity</keyword>
<keyword id="KW-0399">Innate immunity</keyword>
<keyword id="KW-0964">Secreted</keyword>
<keyword id="KW-0732">Signal</keyword>
<comment type="function">
    <text evidence="3 4">Acaloleptins A1-A4 show antibacterial activity against Gram-negative bacteria but not against Gram-positive bacteria. Acaloleptin A5 shows antibacterial activity against Gram-positive bacteria but not against Gram-negative bacteria, and may also have antifungal activity.</text>
</comment>
<comment type="subcellular location">
    <molecule>Acaloleptin A1</molecule>
    <subcellularLocation>
        <location>Secreted</location>
    </subcellularLocation>
</comment>
<comment type="subcellular location">
    <molecule>Acaloleptin A2</molecule>
    <subcellularLocation>
        <location>Secreted</location>
    </subcellularLocation>
</comment>
<comment type="subcellular location">
    <molecule>Acaloleptin A3</molecule>
    <subcellularLocation>
        <location>Secreted</location>
    </subcellularLocation>
</comment>
<comment type="subcellular location">
    <molecule>Acaloleptin A4</molecule>
    <subcellularLocation>
        <location>Secreted</location>
    </subcellularLocation>
</comment>
<comment type="subcellular location">
    <molecule>Acaloleptin A5</molecule>
    <subcellularLocation>
        <location>Secreted</location>
    </subcellularLocation>
</comment>
<comment type="tissue specificity">
    <text evidence="3 4">Hemolymph (at protein level). Larval fat body.</text>
</comment>
<comment type="induction">
    <text evidence="3 4">By bacterial infection. Expression detected 2 hours post-injection, with expression increasing until 48 hours post-injection and remaining considerably high at least until 72 hours post-injection.</text>
</comment>
<comment type="similarity">
    <text evidence="5">Belongs to the coleoptericin family.</text>
</comment>
<evidence type="ECO:0000255" key="1"/>
<evidence type="ECO:0000256" key="2">
    <source>
        <dbReference type="SAM" id="MobiDB-lite"/>
    </source>
</evidence>
<evidence type="ECO:0000269" key="3">
    <source>
    </source>
</evidence>
<evidence type="ECO:0000269" key="4">
    <source>
    </source>
</evidence>
<evidence type="ECO:0000305" key="5"/>
<sequence length="423" mass="48403">MITKISLILFAVLLVSGLEEEERWKRSLQPGAPNVNNNDQPWQVSPHISRDDSGNTKTDINVQRHGENNDFEAGWSKVVRGPNKAKPTWHIGGTHRWRRSLQPGAPNINNKDQPWQVSPHISRDDNGNTRTNINVQRHGENNDFEAGWSKVVRGPNKAKPTWHIGGTHRWRRSLQPGAPNVNNKDQPWQVSPHISRDDSGNTRTNINVQRHGENNDFEAGWSKVVRGPNKAKPTWHIGGTHRWRRSLQPGAPNVNNKDQPWQVSPHISRDDSGNTNTDINLQRHGENHDFDAGWSKVVRGPNKAKPTWHVGGTYRWRRSVDIPHASTDNVDETFWEFDPHTEDDDDKPVLRLRRSDDEDEEEEEDQPWQLNPNIARGDDGNTRADVNIKRRGENHDFEAGWSKVVDGPDRAKPTWHVGGTFRW</sequence>
<accession>P81592</accession>
<accession>Q76K70</accession>
<feature type="signal peptide" evidence="1">
    <location>
        <begin position="1"/>
        <end position="17"/>
    </location>
</feature>
<feature type="propeptide" id="PRO_0000413422">
    <location>
        <begin position="18"/>
        <end position="26"/>
    </location>
</feature>
<feature type="peptide" id="PRO_0000413423" description="Acaloleptin A1" evidence="5">
    <location>
        <begin position="27"/>
        <end position="97"/>
    </location>
</feature>
<feature type="peptide" id="PRO_0000413424" description="Acaloleptin A2" evidence="5">
    <location>
        <begin position="100"/>
        <end position="170"/>
    </location>
</feature>
<feature type="peptide" id="PRO_0000413425" description="Acaloleptin A3">
    <location>
        <begin position="173"/>
        <end position="243"/>
    </location>
</feature>
<feature type="peptide" id="PRO_0000413426" description="Acaloleptin A4" evidence="5">
    <location>
        <begin position="246"/>
        <end position="316"/>
    </location>
</feature>
<feature type="peptide" id="PRO_0000413427" description="Acidic peptide" evidence="5">
    <location>
        <begin position="319"/>
        <end position="350"/>
    </location>
</feature>
<feature type="peptide" id="PRO_0000413428" description="Acaloleptin A5">
    <location>
        <begin position="355"/>
        <end position="423"/>
    </location>
</feature>
<feature type="region of interest" description="Disordered" evidence="2">
    <location>
        <begin position="28"/>
        <end position="58"/>
    </location>
</feature>
<feature type="region of interest" description="Disordered" evidence="2">
    <location>
        <begin position="108"/>
        <end position="128"/>
    </location>
</feature>
<feature type="region of interest" description="Disordered" evidence="2">
    <location>
        <begin position="180"/>
        <end position="203"/>
    </location>
</feature>
<feature type="region of interest" description="Disordered" evidence="2">
    <location>
        <begin position="355"/>
        <end position="385"/>
    </location>
</feature>
<feature type="compositionally biased region" description="Polar residues" evidence="2">
    <location>
        <begin position="34"/>
        <end position="43"/>
    </location>
</feature>
<feature type="compositionally biased region" description="Polar residues" evidence="2">
    <location>
        <begin position="180"/>
        <end position="189"/>
    </location>
</feature>
<feature type="compositionally biased region" description="Acidic residues" evidence="2">
    <location>
        <begin position="357"/>
        <end position="366"/>
    </location>
</feature>
<feature type="compositionally biased region" description="Basic and acidic residues" evidence="2">
    <location>
        <begin position="376"/>
        <end position="385"/>
    </location>
</feature>
<feature type="sequence conflict" description="In Ref. 2; AA sequence." evidence="5" ref="2">
    <original>N</original>
    <variation>D</variation>
    <location>
        <position position="205"/>
    </location>
</feature>
<name>ACALA_ACALU</name>
<dbReference type="EMBL" id="AB094343">
    <property type="protein sequence ID" value="BAC82199.1"/>
    <property type="molecule type" value="mRNA"/>
</dbReference>
<dbReference type="SMR" id="P81592"/>
<dbReference type="GO" id="GO:0005576">
    <property type="term" value="C:extracellular region"/>
    <property type="evidence" value="ECO:0007669"/>
    <property type="project" value="UniProtKB-SubCell"/>
</dbReference>
<dbReference type="GO" id="GO:0042742">
    <property type="term" value="P:defense response to bacterium"/>
    <property type="evidence" value="ECO:0007669"/>
    <property type="project" value="UniProtKB-KW"/>
</dbReference>
<dbReference type="GO" id="GO:0045087">
    <property type="term" value="P:innate immune response"/>
    <property type="evidence" value="ECO:0007669"/>
    <property type="project" value="UniProtKB-KW"/>
</dbReference>
<dbReference type="InterPro" id="IPR009382">
    <property type="entry name" value="Coleoptericin"/>
</dbReference>
<dbReference type="Pfam" id="PF06286">
    <property type="entry name" value="Coleoptericin"/>
    <property type="match status" value="5"/>
</dbReference>
<organism>
    <name type="scientific">Acalolepta luxuriosa</name>
    <name type="common">Udo longhorn beetle</name>
    <dbReference type="NCBI Taxonomy" id="85306"/>
    <lineage>
        <taxon>Eukaryota</taxon>
        <taxon>Metazoa</taxon>
        <taxon>Ecdysozoa</taxon>
        <taxon>Arthropoda</taxon>
        <taxon>Hexapoda</taxon>
        <taxon>Insecta</taxon>
        <taxon>Pterygota</taxon>
        <taxon>Neoptera</taxon>
        <taxon>Endopterygota</taxon>
        <taxon>Coleoptera</taxon>
        <taxon>Polyphaga</taxon>
        <taxon>Cucujiformia</taxon>
        <taxon>Chrysomeloidea</taxon>
        <taxon>Cerambycidae</taxon>
        <taxon>Lamiinae</taxon>
        <taxon>Monochamini</taxon>
        <taxon>Acalolepta</taxon>
    </lineage>
</organism>